<protein>
    <recommendedName>
        <fullName evidence="1">Ribosome-binding factor A</fullName>
    </recommendedName>
</protein>
<comment type="function">
    <text evidence="1">One of several proteins that assist in the late maturation steps of the functional core of the 30S ribosomal subunit. Associates with free 30S ribosomal subunits (but not with 30S subunits that are part of 70S ribosomes or polysomes). Required for efficient processing of 16S rRNA. May interact with the 5'-terminal helix region of 16S rRNA.</text>
</comment>
<comment type="subunit">
    <text evidence="1">Monomer. Binds 30S ribosomal subunits, but not 50S ribosomal subunits or 70S ribosomes.</text>
</comment>
<comment type="subcellular location">
    <subcellularLocation>
        <location evidence="1">Cytoplasm</location>
    </subcellularLocation>
</comment>
<comment type="similarity">
    <text evidence="1">Belongs to the RbfA family.</text>
</comment>
<reference key="1">
    <citation type="journal article" date="2008" name="BMC Genomics">
        <title>The genome of Aeromonas salmonicida subsp. salmonicida A449: insights into the evolution of a fish pathogen.</title>
        <authorList>
            <person name="Reith M.E."/>
            <person name="Singh R.K."/>
            <person name="Curtis B."/>
            <person name="Boyd J.M."/>
            <person name="Bouevitch A."/>
            <person name="Kimball J."/>
            <person name="Munholland J."/>
            <person name="Murphy C."/>
            <person name="Sarty D."/>
            <person name="Williams J."/>
            <person name="Nash J.H."/>
            <person name="Johnson S.C."/>
            <person name="Brown L.L."/>
        </authorList>
    </citation>
    <scope>NUCLEOTIDE SEQUENCE [LARGE SCALE GENOMIC DNA]</scope>
    <source>
        <strain>A449</strain>
    </source>
</reference>
<gene>
    <name evidence="1" type="primary">rbfA</name>
    <name type="ordered locus">ASA_1011</name>
</gene>
<organism>
    <name type="scientific">Aeromonas salmonicida (strain A449)</name>
    <dbReference type="NCBI Taxonomy" id="382245"/>
    <lineage>
        <taxon>Bacteria</taxon>
        <taxon>Pseudomonadati</taxon>
        <taxon>Pseudomonadota</taxon>
        <taxon>Gammaproteobacteria</taxon>
        <taxon>Aeromonadales</taxon>
        <taxon>Aeromonadaceae</taxon>
        <taxon>Aeromonas</taxon>
    </lineage>
</organism>
<feature type="chain" id="PRO_1000000063" description="Ribosome-binding factor A">
    <location>
        <begin position="1"/>
        <end position="144"/>
    </location>
</feature>
<feature type="region of interest" description="Disordered" evidence="2">
    <location>
        <begin position="120"/>
        <end position="144"/>
    </location>
</feature>
<feature type="compositionally biased region" description="Acidic residues" evidence="2">
    <location>
        <begin position="129"/>
        <end position="144"/>
    </location>
</feature>
<sequence length="144" mass="16369">MAREFSRTNRVGQQIQREIALILQREVKDPRIGMVTVSDVEVSKDLNYAKVYVTFLQLDIDAERIAEGLKGLTEAAGYIRSLLGSAMRLRVVPELRFYYDQTLVEGMRISNLVSNTVRDDKRRMAEAGREEDEAAPDDTTEDKA</sequence>
<evidence type="ECO:0000255" key="1">
    <source>
        <dbReference type="HAMAP-Rule" id="MF_00003"/>
    </source>
</evidence>
<evidence type="ECO:0000256" key="2">
    <source>
        <dbReference type="SAM" id="MobiDB-lite"/>
    </source>
</evidence>
<proteinExistence type="inferred from homology"/>
<dbReference type="EMBL" id="CP000644">
    <property type="protein sequence ID" value="ABO89138.1"/>
    <property type="molecule type" value="Genomic_DNA"/>
</dbReference>
<dbReference type="RefSeq" id="WP_005317518.1">
    <property type="nucleotide sequence ID" value="NC_009348.1"/>
</dbReference>
<dbReference type="SMR" id="A4SJR6"/>
<dbReference type="STRING" id="29491.GCA_000820065_01172"/>
<dbReference type="GeneID" id="79878674"/>
<dbReference type="KEGG" id="asa:ASA_1011"/>
<dbReference type="eggNOG" id="COG0858">
    <property type="taxonomic scope" value="Bacteria"/>
</dbReference>
<dbReference type="HOGENOM" id="CLU_089475_5_0_6"/>
<dbReference type="Proteomes" id="UP000000225">
    <property type="component" value="Chromosome"/>
</dbReference>
<dbReference type="GO" id="GO:0005829">
    <property type="term" value="C:cytosol"/>
    <property type="evidence" value="ECO:0007669"/>
    <property type="project" value="TreeGrafter"/>
</dbReference>
<dbReference type="GO" id="GO:0043024">
    <property type="term" value="F:ribosomal small subunit binding"/>
    <property type="evidence" value="ECO:0007669"/>
    <property type="project" value="TreeGrafter"/>
</dbReference>
<dbReference type="GO" id="GO:0030490">
    <property type="term" value="P:maturation of SSU-rRNA"/>
    <property type="evidence" value="ECO:0007669"/>
    <property type="project" value="UniProtKB-UniRule"/>
</dbReference>
<dbReference type="FunFam" id="3.30.300.20:FF:000007">
    <property type="entry name" value="Ribosome-binding factor A"/>
    <property type="match status" value="1"/>
</dbReference>
<dbReference type="Gene3D" id="3.30.300.20">
    <property type="match status" value="1"/>
</dbReference>
<dbReference type="HAMAP" id="MF_00003">
    <property type="entry name" value="RbfA"/>
    <property type="match status" value="1"/>
</dbReference>
<dbReference type="InterPro" id="IPR015946">
    <property type="entry name" value="KH_dom-like_a/b"/>
</dbReference>
<dbReference type="InterPro" id="IPR000238">
    <property type="entry name" value="RbfA"/>
</dbReference>
<dbReference type="InterPro" id="IPR023799">
    <property type="entry name" value="RbfA_dom_sf"/>
</dbReference>
<dbReference type="InterPro" id="IPR020053">
    <property type="entry name" value="Ribosome-bd_factorA_CS"/>
</dbReference>
<dbReference type="NCBIfam" id="TIGR00082">
    <property type="entry name" value="rbfA"/>
    <property type="match status" value="1"/>
</dbReference>
<dbReference type="PANTHER" id="PTHR33515">
    <property type="entry name" value="RIBOSOME-BINDING FACTOR A, CHLOROPLASTIC-RELATED"/>
    <property type="match status" value="1"/>
</dbReference>
<dbReference type="PANTHER" id="PTHR33515:SF1">
    <property type="entry name" value="RIBOSOME-BINDING FACTOR A, CHLOROPLASTIC-RELATED"/>
    <property type="match status" value="1"/>
</dbReference>
<dbReference type="Pfam" id="PF02033">
    <property type="entry name" value="RBFA"/>
    <property type="match status" value="1"/>
</dbReference>
<dbReference type="SUPFAM" id="SSF89919">
    <property type="entry name" value="Ribosome-binding factor A, RbfA"/>
    <property type="match status" value="1"/>
</dbReference>
<dbReference type="PROSITE" id="PS01319">
    <property type="entry name" value="RBFA"/>
    <property type="match status" value="1"/>
</dbReference>
<accession>A4SJR6</accession>
<keyword id="KW-0963">Cytoplasm</keyword>
<keyword id="KW-0690">Ribosome biogenesis</keyword>
<name>RBFA_AERS4</name>